<name>RECF_PSEPF</name>
<reference key="1">
    <citation type="journal article" date="2009" name="Genome Biol.">
        <title>Genomic and genetic analyses of diversity and plant interactions of Pseudomonas fluorescens.</title>
        <authorList>
            <person name="Silby M.W."/>
            <person name="Cerdeno-Tarraga A.M."/>
            <person name="Vernikos G.S."/>
            <person name="Giddens S.R."/>
            <person name="Jackson R.W."/>
            <person name="Preston G.M."/>
            <person name="Zhang X.-X."/>
            <person name="Moon C.D."/>
            <person name="Gehrig S.M."/>
            <person name="Godfrey S.A.C."/>
            <person name="Knight C.G."/>
            <person name="Malone J.G."/>
            <person name="Robinson Z."/>
            <person name="Spiers A.J."/>
            <person name="Harris S."/>
            <person name="Challis G.L."/>
            <person name="Yaxley A.M."/>
            <person name="Harris D."/>
            <person name="Seeger K."/>
            <person name="Murphy L."/>
            <person name="Rutter S."/>
            <person name="Squares R."/>
            <person name="Quail M.A."/>
            <person name="Saunders E."/>
            <person name="Mavromatis K."/>
            <person name="Brettin T.S."/>
            <person name="Bentley S.D."/>
            <person name="Hothersall J."/>
            <person name="Stephens E."/>
            <person name="Thomas C.M."/>
            <person name="Parkhill J."/>
            <person name="Levy S.B."/>
            <person name="Rainey P.B."/>
            <person name="Thomson N.R."/>
        </authorList>
    </citation>
    <scope>NUCLEOTIDE SEQUENCE [LARGE SCALE GENOMIC DNA]</scope>
    <source>
        <strain>Pf0-1</strain>
    </source>
</reference>
<gene>
    <name evidence="1" type="primary">recF</name>
    <name type="ordered locus">Pfl01_0003</name>
</gene>
<feature type="chain" id="PRO_0000236135" description="DNA replication and repair protein RecF">
    <location>
        <begin position="1"/>
        <end position="367"/>
    </location>
</feature>
<feature type="binding site" evidence="1">
    <location>
        <begin position="30"/>
        <end position="37"/>
    </location>
    <ligand>
        <name>ATP</name>
        <dbReference type="ChEBI" id="CHEBI:30616"/>
    </ligand>
</feature>
<protein>
    <recommendedName>
        <fullName evidence="1">DNA replication and repair protein RecF</fullName>
    </recommendedName>
</protein>
<keyword id="KW-0067">ATP-binding</keyword>
<keyword id="KW-0963">Cytoplasm</keyword>
<keyword id="KW-0227">DNA damage</keyword>
<keyword id="KW-0234">DNA repair</keyword>
<keyword id="KW-0235">DNA replication</keyword>
<keyword id="KW-0238">DNA-binding</keyword>
<keyword id="KW-0547">Nucleotide-binding</keyword>
<keyword id="KW-0742">SOS response</keyword>
<comment type="function">
    <text evidence="1">The RecF protein is involved in DNA metabolism; it is required for DNA replication and normal SOS inducibility. RecF binds preferentially to single-stranded, linear DNA. It also seems to bind ATP.</text>
</comment>
<comment type="subcellular location">
    <subcellularLocation>
        <location evidence="1">Cytoplasm</location>
    </subcellularLocation>
</comment>
<comment type="similarity">
    <text evidence="1">Belongs to the RecF family.</text>
</comment>
<dbReference type="EMBL" id="CP000094">
    <property type="protein sequence ID" value="ABA71747.1"/>
    <property type="molecule type" value="Genomic_DNA"/>
</dbReference>
<dbReference type="RefSeq" id="WP_003220208.1">
    <property type="nucleotide sequence ID" value="NC_007492.2"/>
</dbReference>
<dbReference type="SMR" id="Q3KKF9"/>
<dbReference type="GeneID" id="93486727"/>
<dbReference type="KEGG" id="pfo:Pfl01_0003"/>
<dbReference type="eggNOG" id="COG1195">
    <property type="taxonomic scope" value="Bacteria"/>
</dbReference>
<dbReference type="HOGENOM" id="CLU_040267_0_0_6"/>
<dbReference type="Proteomes" id="UP000002704">
    <property type="component" value="Chromosome"/>
</dbReference>
<dbReference type="GO" id="GO:0005737">
    <property type="term" value="C:cytoplasm"/>
    <property type="evidence" value="ECO:0007669"/>
    <property type="project" value="UniProtKB-SubCell"/>
</dbReference>
<dbReference type="GO" id="GO:0005524">
    <property type="term" value="F:ATP binding"/>
    <property type="evidence" value="ECO:0007669"/>
    <property type="project" value="UniProtKB-UniRule"/>
</dbReference>
<dbReference type="GO" id="GO:0003697">
    <property type="term" value="F:single-stranded DNA binding"/>
    <property type="evidence" value="ECO:0007669"/>
    <property type="project" value="UniProtKB-UniRule"/>
</dbReference>
<dbReference type="GO" id="GO:0006260">
    <property type="term" value="P:DNA replication"/>
    <property type="evidence" value="ECO:0007669"/>
    <property type="project" value="UniProtKB-UniRule"/>
</dbReference>
<dbReference type="GO" id="GO:0000731">
    <property type="term" value="P:DNA synthesis involved in DNA repair"/>
    <property type="evidence" value="ECO:0007669"/>
    <property type="project" value="TreeGrafter"/>
</dbReference>
<dbReference type="GO" id="GO:0006302">
    <property type="term" value="P:double-strand break repair"/>
    <property type="evidence" value="ECO:0007669"/>
    <property type="project" value="TreeGrafter"/>
</dbReference>
<dbReference type="GO" id="GO:0009432">
    <property type="term" value="P:SOS response"/>
    <property type="evidence" value="ECO:0007669"/>
    <property type="project" value="UniProtKB-UniRule"/>
</dbReference>
<dbReference type="FunFam" id="1.20.1050.90:FF:000003">
    <property type="entry name" value="DNA replication and repair protein RecF"/>
    <property type="match status" value="1"/>
</dbReference>
<dbReference type="Gene3D" id="3.40.50.300">
    <property type="entry name" value="P-loop containing nucleotide triphosphate hydrolases"/>
    <property type="match status" value="1"/>
</dbReference>
<dbReference type="Gene3D" id="1.20.1050.90">
    <property type="entry name" value="RecF/RecN/SMC, N-terminal domain"/>
    <property type="match status" value="1"/>
</dbReference>
<dbReference type="HAMAP" id="MF_00365">
    <property type="entry name" value="RecF"/>
    <property type="match status" value="1"/>
</dbReference>
<dbReference type="InterPro" id="IPR001238">
    <property type="entry name" value="DNA-binding_RecF"/>
</dbReference>
<dbReference type="InterPro" id="IPR018078">
    <property type="entry name" value="DNA-binding_RecF_CS"/>
</dbReference>
<dbReference type="InterPro" id="IPR027417">
    <property type="entry name" value="P-loop_NTPase"/>
</dbReference>
<dbReference type="InterPro" id="IPR003395">
    <property type="entry name" value="RecF/RecN/SMC_N"/>
</dbReference>
<dbReference type="InterPro" id="IPR042174">
    <property type="entry name" value="RecF_2"/>
</dbReference>
<dbReference type="NCBIfam" id="TIGR00611">
    <property type="entry name" value="recf"/>
    <property type="match status" value="1"/>
</dbReference>
<dbReference type="PANTHER" id="PTHR32182">
    <property type="entry name" value="DNA REPLICATION AND REPAIR PROTEIN RECF"/>
    <property type="match status" value="1"/>
</dbReference>
<dbReference type="PANTHER" id="PTHR32182:SF0">
    <property type="entry name" value="DNA REPLICATION AND REPAIR PROTEIN RECF"/>
    <property type="match status" value="1"/>
</dbReference>
<dbReference type="Pfam" id="PF02463">
    <property type="entry name" value="SMC_N"/>
    <property type="match status" value="1"/>
</dbReference>
<dbReference type="SUPFAM" id="SSF52540">
    <property type="entry name" value="P-loop containing nucleoside triphosphate hydrolases"/>
    <property type="match status" value="1"/>
</dbReference>
<dbReference type="PROSITE" id="PS00617">
    <property type="entry name" value="RECF_1"/>
    <property type="match status" value="1"/>
</dbReference>
<dbReference type="PROSITE" id="PS00618">
    <property type="entry name" value="RECF_2"/>
    <property type="match status" value="1"/>
</dbReference>
<sequence length="367" mass="41575">MSLSRVSVTAVRNLHPVTFSPSPRINILYGANGSGKTSVLEAIHLLGLARSFRSTRLLPVIQYEQLACTVFGQVELAEGGHSALGISRDRQGEFQIRIDGQNARSAAQLAEILPLQLINPDSFRLLEGAPKIRRQFLDWGVFHVEPRFMATWQRLQKALRQRNSWLRHGTLDAVSQAVWDRELCQASAEIDEYRRAYIKALKPVFEQTLSELVELEGLTLSYYRGWDKDRELSAVLAGSVQRDQQMGHTQAGPQRADLRLRLGAHNAADILSRGQQKLVVCALRIAQGHLVSQARRGQCIYLVDDLPSELDESHRRALCRLLEDLRCQVFITCVDHELLREGWQTETPVALFHVEQGRITQTHDHRE</sequence>
<proteinExistence type="inferred from homology"/>
<accession>Q3KKF9</accession>
<evidence type="ECO:0000255" key="1">
    <source>
        <dbReference type="HAMAP-Rule" id="MF_00365"/>
    </source>
</evidence>
<organism>
    <name type="scientific">Pseudomonas fluorescens (strain Pf0-1)</name>
    <dbReference type="NCBI Taxonomy" id="205922"/>
    <lineage>
        <taxon>Bacteria</taxon>
        <taxon>Pseudomonadati</taxon>
        <taxon>Pseudomonadota</taxon>
        <taxon>Gammaproteobacteria</taxon>
        <taxon>Pseudomonadales</taxon>
        <taxon>Pseudomonadaceae</taxon>
        <taxon>Pseudomonas</taxon>
    </lineage>
</organism>